<name>PADI3_HUMAN</name>
<reference key="1">
    <citation type="journal article" date="2000" name="J. Invest. Dermatol.">
        <title>Human peptidylarginine deiminase type III: molecular cloning and nucleotide sequence of the cDNA, properties of the recombinant enzyme, and immunohistochemical localization in human skin.</title>
        <authorList>
            <person name="Kanno T."/>
            <person name="Kawada A."/>
            <person name="Yamanouchi J."/>
            <person name="Yosida-Noro C."/>
            <person name="Yoshiki A."/>
            <person name="Shiraiwa M."/>
            <person name="Kusakabe M."/>
            <person name="Manabe M."/>
            <person name="Tezuka T."/>
            <person name="Takahara H."/>
        </authorList>
    </citation>
    <scope>NUCLEOTIDE SEQUENCE [MRNA]</scope>
    <scope>CHARACTERIZATION</scope>
    <source>
        <tissue>Keratinocyte</tissue>
    </source>
</reference>
<reference key="2">
    <citation type="journal article" date="2004" name="Gene">
        <title>Comparative analysis of the mouse and human peptidylarginine deiminase gene clusters reveals highly conserved non-coding segments and a new human gene, PADI6.</title>
        <authorList>
            <person name="Chavanas S."/>
            <person name="Mechin M.-C."/>
            <person name="Takahara H."/>
            <person name="Kawada A."/>
            <person name="Nachat R."/>
            <person name="Serre G."/>
            <person name="Simon M."/>
        </authorList>
    </citation>
    <scope>NUCLEOTIDE SEQUENCE [GENOMIC DNA]</scope>
</reference>
<reference key="3">
    <citation type="journal article" date="2006" name="Nature">
        <title>The DNA sequence and biological annotation of human chromosome 1.</title>
        <authorList>
            <person name="Gregory S.G."/>
            <person name="Barlow K.F."/>
            <person name="McLay K.E."/>
            <person name="Kaul R."/>
            <person name="Swarbreck D."/>
            <person name="Dunham A."/>
            <person name="Scott C.E."/>
            <person name="Howe K.L."/>
            <person name="Woodfine K."/>
            <person name="Spencer C.C.A."/>
            <person name="Jones M.C."/>
            <person name="Gillson C."/>
            <person name="Searle S."/>
            <person name="Zhou Y."/>
            <person name="Kokocinski F."/>
            <person name="McDonald L."/>
            <person name="Evans R."/>
            <person name="Phillips K."/>
            <person name="Atkinson A."/>
            <person name="Cooper R."/>
            <person name="Jones C."/>
            <person name="Hall R.E."/>
            <person name="Andrews T.D."/>
            <person name="Lloyd C."/>
            <person name="Ainscough R."/>
            <person name="Almeida J.P."/>
            <person name="Ambrose K.D."/>
            <person name="Anderson F."/>
            <person name="Andrew R.W."/>
            <person name="Ashwell R.I.S."/>
            <person name="Aubin K."/>
            <person name="Babbage A.K."/>
            <person name="Bagguley C.L."/>
            <person name="Bailey J."/>
            <person name="Beasley H."/>
            <person name="Bethel G."/>
            <person name="Bird C.P."/>
            <person name="Bray-Allen S."/>
            <person name="Brown J.Y."/>
            <person name="Brown A.J."/>
            <person name="Buckley D."/>
            <person name="Burton J."/>
            <person name="Bye J."/>
            <person name="Carder C."/>
            <person name="Chapman J.C."/>
            <person name="Clark S.Y."/>
            <person name="Clarke G."/>
            <person name="Clee C."/>
            <person name="Cobley V."/>
            <person name="Collier R.E."/>
            <person name="Corby N."/>
            <person name="Coville G.J."/>
            <person name="Davies J."/>
            <person name="Deadman R."/>
            <person name="Dunn M."/>
            <person name="Earthrowl M."/>
            <person name="Ellington A.G."/>
            <person name="Errington H."/>
            <person name="Frankish A."/>
            <person name="Frankland J."/>
            <person name="French L."/>
            <person name="Garner P."/>
            <person name="Garnett J."/>
            <person name="Gay L."/>
            <person name="Ghori M.R.J."/>
            <person name="Gibson R."/>
            <person name="Gilby L.M."/>
            <person name="Gillett W."/>
            <person name="Glithero R.J."/>
            <person name="Grafham D.V."/>
            <person name="Griffiths C."/>
            <person name="Griffiths-Jones S."/>
            <person name="Grocock R."/>
            <person name="Hammond S."/>
            <person name="Harrison E.S.I."/>
            <person name="Hart E."/>
            <person name="Haugen E."/>
            <person name="Heath P.D."/>
            <person name="Holmes S."/>
            <person name="Holt K."/>
            <person name="Howden P.J."/>
            <person name="Hunt A.R."/>
            <person name="Hunt S.E."/>
            <person name="Hunter G."/>
            <person name="Isherwood J."/>
            <person name="James R."/>
            <person name="Johnson C."/>
            <person name="Johnson D."/>
            <person name="Joy A."/>
            <person name="Kay M."/>
            <person name="Kershaw J.K."/>
            <person name="Kibukawa M."/>
            <person name="Kimberley A.M."/>
            <person name="King A."/>
            <person name="Knights A.J."/>
            <person name="Lad H."/>
            <person name="Laird G."/>
            <person name="Lawlor S."/>
            <person name="Leongamornlert D.A."/>
            <person name="Lloyd D.M."/>
            <person name="Loveland J."/>
            <person name="Lovell J."/>
            <person name="Lush M.J."/>
            <person name="Lyne R."/>
            <person name="Martin S."/>
            <person name="Mashreghi-Mohammadi M."/>
            <person name="Matthews L."/>
            <person name="Matthews N.S.W."/>
            <person name="McLaren S."/>
            <person name="Milne S."/>
            <person name="Mistry S."/>
            <person name="Moore M.J.F."/>
            <person name="Nickerson T."/>
            <person name="O'Dell C.N."/>
            <person name="Oliver K."/>
            <person name="Palmeiri A."/>
            <person name="Palmer S.A."/>
            <person name="Parker A."/>
            <person name="Patel D."/>
            <person name="Pearce A.V."/>
            <person name="Peck A.I."/>
            <person name="Pelan S."/>
            <person name="Phelps K."/>
            <person name="Phillimore B.J."/>
            <person name="Plumb R."/>
            <person name="Rajan J."/>
            <person name="Raymond C."/>
            <person name="Rouse G."/>
            <person name="Saenphimmachak C."/>
            <person name="Sehra H.K."/>
            <person name="Sheridan E."/>
            <person name="Shownkeen R."/>
            <person name="Sims S."/>
            <person name="Skuce C.D."/>
            <person name="Smith M."/>
            <person name="Steward C."/>
            <person name="Subramanian S."/>
            <person name="Sycamore N."/>
            <person name="Tracey A."/>
            <person name="Tromans A."/>
            <person name="Van Helmond Z."/>
            <person name="Wall M."/>
            <person name="Wallis J.M."/>
            <person name="White S."/>
            <person name="Whitehead S.L."/>
            <person name="Wilkinson J.E."/>
            <person name="Willey D.L."/>
            <person name="Williams H."/>
            <person name="Wilming L."/>
            <person name="Wray P.W."/>
            <person name="Wu Z."/>
            <person name="Coulson A."/>
            <person name="Vaudin M."/>
            <person name="Sulston J.E."/>
            <person name="Durbin R.M."/>
            <person name="Hubbard T."/>
            <person name="Wooster R."/>
            <person name="Dunham I."/>
            <person name="Carter N.P."/>
            <person name="McVean G."/>
            <person name="Ross M.T."/>
            <person name="Harrow J."/>
            <person name="Olson M.V."/>
            <person name="Beck S."/>
            <person name="Rogers J."/>
            <person name="Bentley D.R."/>
        </authorList>
    </citation>
    <scope>NUCLEOTIDE SEQUENCE [LARGE SCALE GENOMIC DNA]</scope>
</reference>
<reference key="4">
    <citation type="journal article" date="2004" name="Genome Res.">
        <title>The status, quality, and expansion of the NIH full-length cDNA project: the Mammalian Gene Collection (MGC).</title>
        <authorList>
            <consortium name="The MGC Project Team"/>
        </authorList>
    </citation>
    <scope>NUCLEOTIDE SEQUENCE [LARGE SCALE MRNA]</scope>
    <source>
        <tissue>Brain</tissue>
    </source>
</reference>
<reference key="5">
    <citation type="journal article" date="2006" name="Science">
        <title>The consensus coding sequences of human breast and colorectal cancers.</title>
        <authorList>
            <person name="Sjoeblom T."/>
            <person name="Jones S."/>
            <person name="Wood L.D."/>
            <person name="Parsons D.W."/>
            <person name="Lin J."/>
            <person name="Barber T.D."/>
            <person name="Mandelker D."/>
            <person name="Leary R.J."/>
            <person name="Ptak J."/>
            <person name="Silliman N."/>
            <person name="Szabo S."/>
            <person name="Buckhaults P."/>
            <person name="Farrell C."/>
            <person name="Meeh P."/>
            <person name="Markowitz S.D."/>
            <person name="Willis J."/>
            <person name="Dawson D."/>
            <person name="Willson J.K.V."/>
            <person name="Gazdar A.F."/>
            <person name="Hartigan J."/>
            <person name="Wu L."/>
            <person name="Liu C."/>
            <person name="Parmigiani G."/>
            <person name="Park B.H."/>
            <person name="Bachman K.E."/>
            <person name="Papadopoulos N."/>
            <person name="Vogelstein B."/>
            <person name="Kinzler K.W."/>
            <person name="Velculescu V.E."/>
        </authorList>
    </citation>
    <scope>VARIANT [LARGE SCALE ANALYSIS] ARG-509</scope>
</reference>
<reference key="6">
    <citation type="journal article" date="2016" name="Am. J. Hum. Genet.">
        <title>Mutations in three genes encoding proteins involved in hair shaft formation cause uncombable hair syndrome.</title>
        <authorList>
            <person name="Ue Basmanav F.B."/>
            <person name="Cau L."/>
            <person name="Tafazzoli A."/>
            <person name="Mechin M.C."/>
            <person name="Wolf S."/>
            <person name="Romano M.T."/>
            <person name="Valentin F."/>
            <person name="Wiegmann H."/>
            <person name="Huchenq A."/>
            <person name="Kandil R."/>
            <person name="Garcia Bartels N."/>
            <person name="Kilic A."/>
            <person name="George S."/>
            <person name="Ralser D.J."/>
            <person name="Bergner S."/>
            <person name="Ferguson D.J."/>
            <person name="Oprisoreanu A.M."/>
            <person name="Wehner M."/>
            <person name="Thiele H."/>
            <person name="Altmueller J."/>
            <person name="Nuernberg P."/>
            <person name="Swan D."/>
            <person name="Houniet D."/>
            <person name="Buechner A."/>
            <person name="Weibel L."/>
            <person name="Wagner N."/>
            <person name="Grimalt R."/>
            <person name="Bygum A."/>
            <person name="Serre G."/>
            <person name="Blume-Peytavi U."/>
            <person name="Sprecher E."/>
            <person name="Schoch S."/>
            <person name="Oji V."/>
            <person name="Hamm H."/>
            <person name="Farrant P."/>
            <person name="Simon M."/>
            <person name="Betz R.C."/>
        </authorList>
    </citation>
    <scope>INVOLVEMENT IN UHS1</scope>
    <scope>VARIANTS UHS1 HIS-112; VAL-294 AND THR-605</scope>
    <scope>CHARACTERIZATION OF VARIANTS UHS1 HIS-112 AND THR-605</scope>
    <scope>SUBCELLULAR LOCATION</scope>
    <scope>CATALYTIC ACTIVITY</scope>
    <scope>FUNCTION</scope>
</reference>
<accession>Q9ULW8</accession>
<accession>Q58EY7</accession>
<accession>Q70SX5</accession>
<protein>
    <recommendedName>
        <fullName>Protein-arginine deiminase type-3</fullName>
        <ecNumber evidence="3">3.5.3.15</ecNumber>
    </recommendedName>
    <alternativeName>
        <fullName>Peptidylarginine deiminase III</fullName>
    </alternativeName>
    <alternativeName>
        <fullName>Protein-arginine deiminase type III</fullName>
    </alternativeName>
</protein>
<keyword id="KW-0002">3D-structure</keyword>
<keyword id="KW-0106">Calcium</keyword>
<keyword id="KW-0963">Cytoplasm</keyword>
<keyword id="KW-0225">Disease variant</keyword>
<keyword id="KW-0378">Hydrolase</keyword>
<keyword id="KW-1267">Proteomics identification</keyword>
<keyword id="KW-1185">Reference proteome</keyword>
<proteinExistence type="evidence at protein level"/>
<organism>
    <name type="scientific">Homo sapiens</name>
    <name type="common">Human</name>
    <dbReference type="NCBI Taxonomy" id="9606"/>
    <lineage>
        <taxon>Eukaryota</taxon>
        <taxon>Metazoa</taxon>
        <taxon>Chordata</taxon>
        <taxon>Craniata</taxon>
        <taxon>Vertebrata</taxon>
        <taxon>Euteleostomi</taxon>
        <taxon>Mammalia</taxon>
        <taxon>Eutheria</taxon>
        <taxon>Euarchontoglires</taxon>
        <taxon>Primates</taxon>
        <taxon>Haplorrhini</taxon>
        <taxon>Catarrhini</taxon>
        <taxon>Hominidae</taxon>
        <taxon>Homo</taxon>
    </lineage>
</organism>
<evidence type="ECO:0000250" key="1"/>
<evidence type="ECO:0000269" key="2">
    <source>
    </source>
</evidence>
<evidence type="ECO:0000269" key="3">
    <source>
    </source>
</evidence>
<evidence type="ECO:0000305" key="4"/>
<evidence type="ECO:0007829" key="5">
    <source>
        <dbReference type="PDB" id="6CE1"/>
    </source>
</evidence>
<evidence type="ECO:0007829" key="6">
    <source>
        <dbReference type="PDB" id="7D4Y"/>
    </source>
</evidence>
<evidence type="ECO:0007829" key="7">
    <source>
        <dbReference type="PDB" id="7D5R"/>
    </source>
</evidence>
<evidence type="ECO:0007829" key="8">
    <source>
        <dbReference type="PDB" id="7D5V"/>
    </source>
</evidence>
<evidence type="ECO:0007829" key="9">
    <source>
        <dbReference type="PDB" id="7D8N"/>
    </source>
</evidence>
<evidence type="ECO:0007829" key="10">
    <source>
        <dbReference type="PDB" id="7DAN"/>
    </source>
</evidence>
<feature type="chain" id="PRO_0000220029" description="Protein-arginine deiminase type-3">
    <location>
        <begin position="1"/>
        <end position="664"/>
    </location>
</feature>
<feature type="sequence variant" id="VAR_020462" description="In dbSNP:rs3750300.">
    <original>I</original>
    <variation>V</variation>
    <location>
        <position position="52"/>
    </location>
</feature>
<feature type="sequence variant" id="VAR_078023" description="In UHS1; forms large aggregates; decreases protein-arginine deiminase activity; dbSNP:rs142129409." evidence="3">
    <original>L</original>
    <variation>H</variation>
    <location>
        <position position="112"/>
    </location>
</feature>
<feature type="sequence variant" id="VAR_020463" description="In dbSNP:rs2272629.">
    <original>V</original>
    <variation>M</variation>
    <location>
        <position position="171"/>
    </location>
</feature>
<feature type="sequence variant" id="VAR_078024" description="In UHS1; forms large aggregates; decreases protein-arginine deiminase activity; dbSNP:rs144080386." evidence="3">
    <original>A</original>
    <variation>V</variation>
    <location>
        <position position="294"/>
    </location>
</feature>
<feature type="sequence variant" id="VAR_035502" description="In a breast cancer sample; somatic mutation; dbSNP:rs781009577." evidence="2">
    <original>G</original>
    <variation>R</variation>
    <location>
        <position position="509"/>
    </location>
</feature>
<feature type="sequence variant" id="VAR_053558" description="In dbSNP:rs34097903.">
    <original>A</original>
    <variation>T</variation>
    <location>
        <position position="582"/>
    </location>
</feature>
<feature type="sequence variant" id="VAR_078025" description="In UHS1; forms large aggregates; decreases protein-arginine deiminase activity; dbSNP:rs144944758." evidence="3">
    <original>P</original>
    <variation>T</variation>
    <location>
        <position position="605"/>
    </location>
</feature>
<feature type="sequence variant" id="VAR_053559" description="In dbSNP:rs35624745.">
    <original>R</original>
    <variation>Q</variation>
    <location>
        <position position="618"/>
    </location>
</feature>
<feature type="sequence conflict" description="In Ref. 1; BAA85974." evidence="4" ref="1">
    <original>A</original>
    <variation>V</variation>
    <location>
        <position position="480"/>
    </location>
</feature>
<feature type="strand" evidence="8">
    <location>
        <begin position="4"/>
        <end position="9"/>
    </location>
</feature>
<feature type="strand" evidence="8">
    <location>
        <begin position="11"/>
        <end position="13"/>
    </location>
</feature>
<feature type="strand" evidence="8">
    <location>
        <begin position="15"/>
        <end position="20"/>
    </location>
</feature>
<feature type="strand" evidence="8">
    <location>
        <begin position="24"/>
        <end position="31"/>
    </location>
</feature>
<feature type="strand" evidence="8">
    <location>
        <begin position="39"/>
        <end position="44"/>
    </location>
</feature>
<feature type="strand" evidence="8">
    <location>
        <begin position="48"/>
        <end position="54"/>
    </location>
</feature>
<feature type="strand" evidence="8">
    <location>
        <begin position="64"/>
        <end position="66"/>
    </location>
</feature>
<feature type="strand" evidence="8">
    <location>
        <begin position="74"/>
        <end position="80"/>
    </location>
</feature>
<feature type="strand" evidence="8">
    <location>
        <begin position="90"/>
        <end position="97"/>
    </location>
</feature>
<feature type="strand" evidence="10">
    <location>
        <begin position="99"/>
        <end position="103"/>
    </location>
</feature>
<feature type="strand" evidence="8">
    <location>
        <begin position="105"/>
        <end position="121"/>
    </location>
</feature>
<feature type="strand" evidence="8">
    <location>
        <begin position="126"/>
        <end position="129"/>
    </location>
</feature>
<feature type="strand" evidence="8">
    <location>
        <begin position="131"/>
        <end position="133"/>
    </location>
</feature>
<feature type="strand" evidence="8">
    <location>
        <begin position="148"/>
        <end position="150"/>
    </location>
</feature>
<feature type="strand" evidence="8">
    <location>
        <begin position="153"/>
        <end position="157"/>
    </location>
</feature>
<feature type="strand" evidence="10">
    <location>
        <begin position="158"/>
        <end position="160"/>
    </location>
</feature>
<feature type="strand" evidence="9">
    <location>
        <begin position="167"/>
        <end position="170"/>
    </location>
</feature>
<feature type="strand" evidence="7">
    <location>
        <begin position="173"/>
        <end position="175"/>
    </location>
</feature>
<feature type="helix" evidence="8">
    <location>
        <begin position="176"/>
        <end position="178"/>
    </location>
</feature>
<feature type="strand" evidence="8">
    <location>
        <begin position="180"/>
        <end position="189"/>
    </location>
</feature>
<feature type="helix" evidence="8">
    <location>
        <begin position="191"/>
        <end position="195"/>
    </location>
</feature>
<feature type="strand" evidence="8">
    <location>
        <begin position="197"/>
        <end position="202"/>
    </location>
</feature>
<feature type="helix" evidence="8">
    <location>
        <begin position="205"/>
        <end position="208"/>
    </location>
</feature>
<feature type="strand" evidence="8">
    <location>
        <begin position="211"/>
        <end position="216"/>
    </location>
</feature>
<feature type="turn" evidence="7">
    <location>
        <begin position="219"/>
        <end position="221"/>
    </location>
</feature>
<feature type="strand" evidence="8">
    <location>
        <begin position="225"/>
        <end position="233"/>
    </location>
</feature>
<feature type="strand" evidence="8">
    <location>
        <begin position="236"/>
        <end position="238"/>
    </location>
</feature>
<feature type="turn" evidence="5">
    <location>
        <begin position="242"/>
        <end position="245"/>
    </location>
</feature>
<feature type="strand" evidence="8">
    <location>
        <begin position="246"/>
        <end position="253"/>
    </location>
</feature>
<feature type="strand" evidence="8">
    <location>
        <begin position="263"/>
        <end position="273"/>
    </location>
</feature>
<feature type="strand" evidence="5">
    <location>
        <begin position="277"/>
        <end position="279"/>
    </location>
</feature>
<feature type="strand" evidence="8">
    <location>
        <begin position="282"/>
        <end position="293"/>
    </location>
</feature>
<feature type="strand" evidence="8">
    <location>
        <begin position="305"/>
        <end position="310"/>
    </location>
</feature>
<feature type="helix" evidence="8">
    <location>
        <begin position="317"/>
        <end position="330"/>
    </location>
</feature>
<feature type="strand" evidence="8">
    <location>
        <begin position="333"/>
        <end position="336"/>
    </location>
</feature>
<feature type="turn" evidence="8">
    <location>
        <begin position="348"/>
        <end position="350"/>
    </location>
</feature>
<feature type="strand" evidence="8">
    <location>
        <begin position="351"/>
        <end position="359"/>
    </location>
</feature>
<feature type="strand" evidence="8">
    <location>
        <begin position="362"/>
        <end position="369"/>
    </location>
</feature>
<feature type="strand" evidence="10">
    <location>
        <begin position="374"/>
        <end position="376"/>
    </location>
</feature>
<feature type="helix" evidence="8">
    <location>
        <begin position="381"/>
        <end position="384"/>
    </location>
</feature>
<feature type="strand" evidence="8">
    <location>
        <begin position="390"/>
        <end position="394"/>
    </location>
</feature>
<feature type="helix" evidence="8">
    <location>
        <begin position="407"/>
        <end position="409"/>
    </location>
</feature>
<feature type="strand" evidence="8">
    <location>
        <begin position="410"/>
        <end position="412"/>
    </location>
</feature>
<feature type="strand" evidence="8">
    <location>
        <begin position="415"/>
        <end position="418"/>
    </location>
</feature>
<feature type="strand" evidence="8">
    <location>
        <begin position="421"/>
        <end position="423"/>
    </location>
</feature>
<feature type="strand" evidence="8">
    <location>
        <begin position="428"/>
        <end position="432"/>
    </location>
</feature>
<feature type="helix" evidence="8">
    <location>
        <begin position="444"/>
        <end position="453"/>
    </location>
</feature>
<feature type="strand" evidence="8">
    <location>
        <begin position="459"/>
        <end position="462"/>
    </location>
</feature>
<feature type="strand" evidence="8">
    <location>
        <begin position="466"/>
        <end position="468"/>
    </location>
</feature>
<feature type="helix" evidence="8">
    <location>
        <begin position="471"/>
        <end position="473"/>
    </location>
</feature>
<feature type="strand" evidence="8">
    <location>
        <begin position="475"/>
        <end position="479"/>
    </location>
</feature>
<feature type="strand" evidence="8">
    <location>
        <begin position="485"/>
        <end position="492"/>
    </location>
</feature>
<feature type="helix" evidence="8">
    <location>
        <begin position="493"/>
        <end position="505"/>
    </location>
</feature>
<feature type="turn" evidence="6">
    <location>
        <begin position="506"/>
        <end position="510"/>
    </location>
</feature>
<feature type="turn" evidence="8">
    <location>
        <begin position="514"/>
        <end position="516"/>
    </location>
</feature>
<feature type="helix" evidence="8">
    <location>
        <begin position="528"/>
        <end position="532"/>
    </location>
</feature>
<feature type="helix" evidence="8">
    <location>
        <begin position="535"/>
        <end position="558"/>
    </location>
</feature>
<feature type="helix" evidence="8">
    <location>
        <begin position="563"/>
        <end position="565"/>
    </location>
</feature>
<feature type="strand" evidence="8">
    <location>
        <begin position="566"/>
        <end position="570"/>
    </location>
</feature>
<feature type="strand" evidence="8">
    <location>
        <begin position="573"/>
        <end position="576"/>
    </location>
</feature>
<feature type="strand" evidence="8">
    <location>
        <begin position="579"/>
        <end position="584"/>
    </location>
</feature>
<feature type="strand" evidence="6">
    <location>
        <begin position="587"/>
        <end position="589"/>
    </location>
</feature>
<feature type="strand" evidence="8">
    <location>
        <begin position="591"/>
        <end position="593"/>
    </location>
</feature>
<feature type="strand" evidence="8">
    <location>
        <begin position="596"/>
        <end position="600"/>
    </location>
</feature>
<feature type="strand" evidence="5">
    <location>
        <begin position="606"/>
        <end position="611"/>
    </location>
</feature>
<feature type="helix" evidence="8">
    <location>
        <begin position="612"/>
        <end position="621"/>
    </location>
</feature>
<feature type="helix" evidence="8">
    <location>
        <begin position="622"/>
        <end position="624"/>
    </location>
</feature>
<feature type="strand" evidence="8">
    <location>
        <begin position="627"/>
        <end position="631"/>
    </location>
</feature>
<feature type="strand" evidence="5">
    <location>
        <begin position="633"/>
        <end position="635"/>
    </location>
</feature>
<feature type="strand" evidence="10">
    <location>
        <begin position="637"/>
        <end position="641"/>
    </location>
</feature>
<feature type="helix" evidence="10">
    <location>
        <begin position="644"/>
        <end position="647"/>
    </location>
</feature>
<feature type="strand" evidence="8">
    <location>
        <begin position="648"/>
        <end position="652"/>
    </location>
</feature>
<feature type="helix" evidence="8">
    <location>
        <begin position="659"/>
        <end position="661"/>
    </location>
</feature>
<gene>
    <name type="primary">PADI3</name>
    <name type="synonym">PAD3</name>
    <name type="synonym">PDI3</name>
</gene>
<dbReference type="EC" id="3.5.3.15" evidence="3"/>
<dbReference type="EMBL" id="AB026831">
    <property type="protein sequence ID" value="BAA85974.1"/>
    <property type="molecule type" value="mRNA"/>
</dbReference>
<dbReference type="EMBL" id="AJ549502">
    <property type="protein sequence ID" value="CAE47742.1"/>
    <property type="molecule type" value="Genomic_DNA"/>
</dbReference>
<dbReference type="EMBL" id="AL590644">
    <property type="status" value="NOT_ANNOTATED_CDS"/>
    <property type="molecule type" value="Genomic_DNA"/>
</dbReference>
<dbReference type="EMBL" id="BC041592">
    <property type="protein sequence ID" value="AAH41592.1"/>
    <property type="molecule type" value="mRNA"/>
</dbReference>
<dbReference type="EMBL" id="BC109091">
    <property type="protein sequence ID" value="AAI09092.1"/>
    <property type="molecule type" value="mRNA"/>
</dbReference>
<dbReference type="EMBL" id="BC109092">
    <property type="protein sequence ID" value="AAI09093.1"/>
    <property type="molecule type" value="mRNA"/>
</dbReference>
<dbReference type="CCDS" id="CCDS179.1"/>
<dbReference type="RefSeq" id="NP_057317.2">
    <property type="nucleotide sequence ID" value="NM_016233.2"/>
</dbReference>
<dbReference type="PDB" id="6CE1">
    <property type="method" value="X-ray"/>
    <property type="resolution" value="2.80 A"/>
    <property type="chains" value="A=1-664"/>
</dbReference>
<dbReference type="PDB" id="7D4Y">
    <property type="method" value="X-ray"/>
    <property type="resolution" value="2.96 A"/>
    <property type="chains" value="A/B=1-664"/>
</dbReference>
<dbReference type="PDB" id="7D56">
    <property type="method" value="X-ray"/>
    <property type="resolution" value="3.17 A"/>
    <property type="chains" value="A/B/C=1-664"/>
</dbReference>
<dbReference type="PDB" id="7D5R">
    <property type="method" value="X-ray"/>
    <property type="resolution" value="3.15 A"/>
    <property type="chains" value="A/B=1-664"/>
</dbReference>
<dbReference type="PDB" id="7D5V">
    <property type="method" value="X-ray"/>
    <property type="resolution" value="2.10 A"/>
    <property type="chains" value="A/B=1-664"/>
</dbReference>
<dbReference type="PDB" id="7D8N">
    <property type="method" value="X-ray"/>
    <property type="resolution" value="2.75 A"/>
    <property type="chains" value="A/B=1-664"/>
</dbReference>
<dbReference type="PDB" id="7DAN">
    <property type="method" value="X-ray"/>
    <property type="resolution" value="3.10 A"/>
    <property type="chains" value="A/B/C=1-664"/>
</dbReference>
<dbReference type="PDBsum" id="6CE1"/>
<dbReference type="PDBsum" id="7D4Y"/>
<dbReference type="PDBsum" id="7D56"/>
<dbReference type="PDBsum" id="7D5R"/>
<dbReference type="PDBsum" id="7D5V"/>
<dbReference type="PDBsum" id="7D8N"/>
<dbReference type="PDBsum" id="7DAN"/>
<dbReference type="SMR" id="Q9ULW8"/>
<dbReference type="BioGRID" id="119686">
    <property type="interactions" value="60"/>
</dbReference>
<dbReference type="FunCoup" id="Q9ULW8">
    <property type="interactions" value="128"/>
</dbReference>
<dbReference type="IntAct" id="Q9ULW8">
    <property type="interactions" value="39"/>
</dbReference>
<dbReference type="STRING" id="9606.ENSP00000364609"/>
<dbReference type="BindingDB" id="Q9ULW8"/>
<dbReference type="ChEMBL" id="CHEMBL1909488"/>
<dbReference type="DrugBank" id="DB00155">
    <property type="generic name" value="Citrulline"/>
</dbReference>
<dbReference type="iPTMnet" id="Q9ULW8"/>
<dbReference type="PhosphoSitePlus" id="Q9ULW8"/>
<dbReference type="BioMuta" id="PADI3"/>
<dbReference type="DMDM" id="56757696"/>
<dbReference type="jPOST" id="Q9ULW8"/>
<dbReference type="MassIVE" id="Q9ULW8"/>
<dbReference type="PaxDb" id="9606-ENSP00000364609"/>
<dbReference type="PeptideAtlas" id="Q9ULW8"/>
<dbReference type="ProteomicsDB" id="85144"/>
<dbReference type="TopDownProteomics" id="Q9ULW8"/>
<dbReference type="Antibodypedia" id="29341">
    <property type="antibodies" value="94 antibodies from 18 providers"/>
</dbReference>
<dbReference type="DNASU" id="51702"/>
<dbReference type="Ensembl" id="ENST00000375460.3">
    <property type="protein sequence ID" value="ENSP00000364609.3"/>
    <property type="gene ID" value="ENSG00000142619.4"/>
</dbReference>
<dbReference type="Ensembl" id="ENST00000625769.1">
    <property type="protein sequence ID" value="ENSP00000486702.1"/>
    <property type="gene ID" value="ENSG00000280549.1"/>
</dbReference>
<dbReference type="GeneID" id="51702"/>
<dbReference type="KEGG" id="hsa:51702"/>
<dbReference type="MANE-Select" id="ENST00000375460.3">
    <property type="protein sequence ID" value="ENSP00000364609.3"/>
    <property type="RefSeq nucleotide sequence ID" value="NM_016233.2"/>
    <property type="RefSeq protein sequence ID" value="NP_057317.2"/>
</dbReference>
<dbReference type="UCSC" id="uc001bai.4">
    <property type="organism name" value="human"/>
</dbReference>
<dbReference type="AGR" id="HGNC:18337"/>
<dbReference type="CTD" id="51702"/>
<dbReference type="DisGeNET" id="51702"/>
<dbReference type="GeneCards" id="PADI3"/>
<dbReference type="HGNC" id="HGNC:18337">
    <property type="gene designation" value="PADI3"/>
</dbReference>
<dbReference type="HPA" id="ENSG00000142619">
    <property type="expression patterns" value="Group enriched (esophagus, urinary bladder)"/>
</dbReference>
<dbReference type="MalaCards" id="PADI3"/>
<dbReference type="MIM" id="191480">
    <property type="type" value="phenotype"/>
</dbReference>
<dbReference type="MIM" id="606755">
    <property type="type" value="gene"/>
</dbReference>
<dbReference type="neXtProt" id="NX_Q9ULW8"/>
<dbReference type="OpenTargets" id="ENSG00000142619"/>
<dbReference type="Orphanet" id="1410">
    <property type="disease" value="Uncombable hair syndrome"/>
</dbReference>
<dbReference type="PharmGKB" id="PA32901"/>
<dbReference type="VEuPathDB" id="HostDB:ENSG00000142619"/>
<dbReference type="eggNOG" id="ENOG502QVJA">
    <property type="taxonomic scope" value="Eukaryota"/>
</dbReference>
<dbReference type="GeneTree" id="ENSGT00940000153217"/>
<dbReference type="HOGENOM" id="CLU_021911_0_0_1"/>
<dbReference type="InParanoid" id="Q9ULW8"/>
<dbReference type="OMA" id="QKCGHGR"/>
<dbReference type="OrthoDB" id="5102063at2759"/>
<dbReference type="PAN-GO" id="Q9ULW8">
    <property type="GO annotations" value="4 GO annotations based on evolutionary models"/>
</dbReference>
<dbReference type="PhylomeDB" id="Q9ULW8"/>
<dbReference type="TreeFam" id="TF331952"/>
<dbReference type="BioCyc" id="MetaCyc:HS06944-MONOMER"/>
<dbReference type="BRENDA" id="3.5.3.15">
    <property type="organism ID" value="2681"/>
</dbReference>
<dbReference type="PathwayCommons" id="Q9ULW8"/>
<dbReference type="Reactome" id="R-HSA-3247509">
    <property type="pathway name" value="Chromatin modifying enzymes"/>
</dbReference>
<dbReference type="SignaLink" id="Q9ULW8"/>
<dbReference type="BioGRID-ORCS" id="51702">
    <property type="hits" value="12 hits in 1158 CRISPR screens"/>
</dbReference>
<dbReference type="GeneWiki" id="PADI3"/>
<dbReference type="GenomeRNAi" id="51702"/>
<dbReference type="Pharos" id="Q9ULW8">
    <property type="development level" value="Tchem"/>
</dbReference>
<dbReference type="PRO" id="PR:Q9ULW8"/>
<dbReference type="Proteomes" id="UP000005640">
    <property type="component" value="Chromosome 1"/>
</dbReference>
<dbReference type="RNAct" id="Q9ULW8">
    <property type="molecule type" value="protein"/>
</dbReference>
<dbReference type="Bgee" id="ENSG00000142619">
    <property type="expression patterns" value="Expressed in lower esophagus mucosa and 34 other cell types or tissues"/>
</dbReference>
<dbReference type="GO" id="GO:0005737">
    <property type="term" value="C:cytoplasm"/>
    <property type="evidence" value="ECO:0000314"/>
    <property type="project" value="UniProtKB"/>
</dbReference>
<dbReference type="GO" id="GO:0005829">
    <property type="term" value="C:cytosol"/>
    <property type="evidence" value="ECO:0000314"/>
    <property type="project" value="HPA"/>
</dbReference>
<dbReference type="GO" id="GO:0043231">
    <property type="term" value="C:intracellular membrane-bounded organelle"/>
    <property type="evidence" value="ECO:0000314"/>
    <property type="project" value="HPA"/>
</dbReference>
<dbReference type="GO" id="GO:0005654">
    <property type="term" value="C:nucleoplasm"/>
    <property type="evidence" value="ECO:0000314"/>
    <property type="project" value="HPA"/>
</dbReference>
<dbReference type="GO" id="GO:0005634">
    <property type="term" value="C:nucleus"/>
    <property type="evidence" value="ECO:0000318"/>
    <property type="project" value="GO_Central"/>
</dbReference>
<dbReference type="GO" id="GO:0005509">
    <property type="term" value="F:calcium ion binding"/>
    <property type="evidence" value="ECO:0007669"/>
    <property type="project" value="InterPro"/>
</dbReference>
<dbReference type="GO" id="GO:0042802">
    <property type="term" value="F:identical protein binding"/>
    <property type="evidence" value="ECO:0000353"/>
    <property type="project" value="IntAct"/>
</dbReference>
<dbReference type="GO" id="GO:0004668">
    <property type="term" value="F:protein-arginine deiminase activity"/>
    <property type="evidence" value="ECO:0000315"/>
    <property type="project" value="UniProtKB"/>
</dbReference>
<dbReference type="CDD" id="cd04214">
    <property type="entry name" value="PAD_N"/>
    <property type="match status" value="1"/>
</dbReference>
<dbReference type="FunFam" id="2.60.40.1860:FF:000002">
    <property type="entry name" value="Peptidyl arginine deiminase 3"/>
    <property type="match status" value="1"/>
</dbReference>
<dbReference type="FunFam" id="2.60.40.1700:FF:000001">
    <property type="entry name" value="Protein-arginine deiminase type-2"/>
    <property type="match status" value="1"/>
</dbReference>
<dbReference type="FunFam" id="3.75.10.10:FF:000003">
    <property type="entry name" value="Protein-arginine deiminase type-2"/>
    <property type="match status" value="1"/>
</dbReference>
<dbReference type="Gene3D" id="3.75.10.10">
    <property type="entry name" value="L-arginine/glycine Amidinotransferase, Chain A"/>
    <property type="match status" value="1"/>
</dbReference>
<dbReference type="Gene3D" id="2.60.40.1700">
    <property type="entry name" value="Protein-arginine deiminase, central domain"/>
    <property type="match status" value="1"/>
</dbReference>
<dbReference type="Gene3D" id="2.60.40.1860">
    <property type="entry name" value="Protein-arginine deiminase, N-terminal domain"/>
    <property type="match status" value="1"/>
</dbReference>
<dbReference type="InterPro" id="IPR008972">
    <property type="entry name" value="Cupredoxin"/>
</dbReference>
<dbReference type="InterPro" id="IPR004303">
    <property type="entry name" value="PAD"/>
</dbReference>
<dbReference type="InterPro" id="IPR013530">
    <property type="entry name" value="PAD_C"/>
</dbReference>
<dbReference type="InterPro" id="IPR036556">
    <property type="entry name" value="PAD_central_sf"/>
</dbReference>
<dbReference type="InterPro" id="IPR013732">
    <property type="entry name" value="PAD_N"/>
</dbReference>
<dbReference type="InterPro" id="IPR038685">
    <property type="entry name" value="PAD_N_sf"/>
</dbReference>
<dbReference type="InterPro" id="IPR013733">
    <property type="entry name" value="Prot_Arg_deaminase_cen_dom"/>
</dbReference>
<dbReference type="PANTHER" id="PTHR10837">
    <property type="entry name" value="PEPTIDYLARGININE DEIMINASE"/>
    <property type="match status" value="1"/>
</dbReference>
<dbReference type="PANTHER" id="PTHR10837:SF21">
    <property type="entry name" value="PROTEIN-ARGININE DEIMINASE TYPE-3"/>
    <property type="match status" value="1"/>
</dbReference>
<dbReference type="Pfam" id="PF03068">
    <property type="entry name" value="PAD"/>
    <property type="match status" value="1"/>
</dbReference>
<dbReference type="Pfam" id="PF08527">
    <property type="entry name" value="PAD_M"/>
    <property type="match status" value="1"/>
</dbReference>
<dbReference type="Pfam" id="PF08526">
    <property type="entry name" value="PAD_N"/>
    <property type="match status" value="1"/>
</dbReference>
<dbReference type="PIRSF" id="PIRSF001247">
    <property type="entry name" value="Protein-arginine_deiminase"/>
    <property type="match status" value="1"/>
</dbReference>
<dbReference type="SUPFAM" id="SSF49503">
    <property type="entry name" value="Cupredoxins"/>
    <property type="match status" value="1"/>
</dbReference>
<dbReference type="SUPFAM" id="SSF55909">
    <property type="entry name" value="Pentein"/>
    <property type="match status" value="1"/>
</dbReference>
<dbReference type="SUPFAM" id="SSF110083">
    <property type="entry name" value="Peptidylarginine deiminase Pad4, middle domain"/>
    <property type="match status" value="1"/>
</dbReference>
<comment type="function">
    <text evidence="3">Catalyzes the deimination of arginine residues of proteins.</text>
</comment>
<comment type="catalytic activity">
    <reaction evidence="3">
        <text>L-arginyl-[protein] + H2O = L-citrullyl-[protein] + NH4(+)</text>
        <dbReference type="Rhea" id="RHEA:18089"/>
        <dbReference type="Rhea" id="RHEA-COMP:10532"/>
        <dbReference type="Rhea" id="RHEA-COMP:10588"/>
        <dbReference type="ChEBI" id="CHEBI:15377"/>
        <dbReference type="ChEBI" id="CHEBI:28938"/>
        <dbReference type="ChEBI" id="CHEBI:29965"/>
        <dbReference type="ChEBI" id="CHEBI:83397"/>
        <dbReference type="EC" id="3.5.3.15"/>
    </reaction>
</comment>
<comment type="cofactor">
    <cofactor evidence="1">
        <name>Ca(2+)</name>
        <dbReference type="ChEBI" id="CHEBI:29108"/>
    </cofactor>
</comment>
<comment type="interaction">
    <interactant intactId="EBI-10488185">
        <id>Q9ULW8</id>
    </interactant>
    <interactant intactId="EBI-1044810">
        <id>P24539</id>
        <label>ATP5PB</label>
    </interactant>
    <organismsDiffer>false</organismsDiffer>
    <experiments>3</experiments>
</comment>
<comment type="interaction">
    <interactant intactId="EBI-10488185">
        <id>Q9ULW8</id>
    </interactant>
    <interactant intactId="EBI-395638">
        <id>O14645</id>
        <label>DNALI1</label>
    </interactant>
    <organismsDiffer>false</organismsDiffer>
    <experiments>3</experiments>
</comment>
<comment type="interaction">
    <interactant intactId="EBI-10488185">
        <id>Q9ULW8</id>
    </interactant>
    <interactant intactId="EBI-6509505">
        <id>Q0VD86</id>
        <label>INCA1</label>
    </interactant>
    <organismsDiffer>false</organismsDiffer>
    <experiments>3</experiments>
</comment>
<comment type="interaction">
    <interactant intactId="EBI-10488185">
        <id>Q9ULW8</id>
    </interactant>
    <interactant intactId="EBI-948266">
        <id>O14901</id>
        <label>KLF11</label>
    </interactant>
    <organismsDiffer>false</organismsDiffer>
    <experiments>3</experiments>
</comment>
<comment type="interaction">
    <interactant intactId="EBI-10488185">
        <id>Q9ULW8</id>
    </interactant>
    <interactant intactId="EBI-73995">
        <id>P27361</id>
        <label>MAPK3</label>
    </interactant>
    <organismsDiffer>false</organismsDiffer>
    <experiments>3</experiments>
</comment>
<comment type="interaction">
    <interactant intactId="EBI-10488185">
        <id>Q9ULW8</id>
    </interactant>
    <interactant intactId="EBI-2811583">
        <id>Q9BVL2</id>
        <label>NUP58</label>
    </interactant>
    <organismsDiffer>false</organismsDiffer>
    <experiments>3</experiments>
</comment>
<comment type="interaction">
    <interactant intactId="EBI-10488185">
        <id>Q9ULW8</id>
    </interactant>
    <interactant intactId="EBI-10488185">
        <id>Q9ULW8</id>
        <label>PADI3</label>
    </interactant>
    <organismsDiffer>false</organismsDiffer>
    <experiments>4</experiments>
</comment>
<comment type="interaction">
    <interactant intactId="EBI-10488185">
        <id>Q9ULW8</id>
    </interactant>
    <interactant intactId="EBI-10829018">
        <id>Q04864-2</id>
        <label>REL</label>
    </interactant>
    <organismsDiffer>false</organismsDiffer>
    <experiments>3</experiments>
</comment>
<comment type="subcellular location">
    <subcellularLocation>
        <location evidence="3">Cytoplasm</location>
    </subcellularLocation>
</comment>
<comment type="tissue specificity">
    <text>Hair follicles, and epidermis at very low levels.</text>
</comment>
<comment type="disease" evidence="3">
    <disease id="DI-04895">
        <name>Uncombable hair syndrome 1</name>
        <acronym>UHS1</acronym>
        <description>A form of uncombable hair syndrome, a condition characterized by scalp hair that is impossible to comb due to the haphazard arrangement of the hair bundles. A characteristic morphologic feature is a triangular to reniform to heart shape on cross-sections, and a groove, canal or flattening along the entire length of the hair. Most individuals are affected early in childhood and the hair takes on a spun-glass appearance with the hair becoming dry, curly, glossy, lighter in color, and progressively uncombable. The hair growth rate can range from slow to normal, and the condition improves with age. UHS1 inheritance is autosomal dominant.</description>
        <dbReference type="MIM" id="191480"/>
    </disease>
    <text>The disease is caused by variants affecting the gene represented in this entry.</text>
</comment>
<comment type="similarity">
    <text evidence="4">Belongs to the protein arginine deiminase family.</text>
</comment>
<sequence>MSLQRIVRVSLEHPTSAVCVAGVETLVDIYGSVPEGTEMFEVYGTPGVDIYISPNMERGRERADTRRWRFDATLEIIVVMNSPSNDLNDSHVQISYHSSHEPLPLAYAVLYLTCVDISLDCDLNCEGRQDRNFVDKRQWVWGPSGYGGILLVNCDRDDPSCDVQDNCDQHVHCLQDLEDMSVMVLRTQGPAALFDDHKLVLHTSSYDAKRAQVFHICGPEDVCEAYRHVLGQDKVSYEVPRLHGDEERFFVEGLSFPDAGFTGLISFHVTLLDDSNEDFSASPIFTDTVVFRVAPWIMTPSTLPPLEVYVCRVRNNTCFVDAVAELARKAGCKLTICPQAENRNDRWIQDEMELGYVQAPHKTLPVVFDSPRNGELQDFPYKRILGPDFGYVTREPRDRSVSGLDSFGNLEVSPPVVANGKEYPLGRILIGGNLPGSSGRRVTQVVRDFLHAQKVQPPVELFVDWLAVGHVDEFLSFVPAPDGKGFRMLLASPGACFKLFQEKQKCGHGRALLFQGVVDDEQVKTISINQVLSNKDLINYNKFVQSCIDWNREVLKRELGLAECDIIDIPQLFKTERKKATAFFPDLVNMLVLGKHLGIPKPFGPIINGCCCLEEKVRSLLEPLGLHCTFIDDFTPYHMLHGEVHCGTNVCRKPFSFKWWNMVP</sequence>